<name>YOPH_YEREN</name>
<protein>
    <recommendedName>
        <fullName>Tyrosine-protein phosphatase YopH</fullName>
        <ecNumber>3.1.3.48</ecNumber>
    </recommendedName>
    <alternativeName>
        <fullName>Virulence protein</fullName>
    </alternativeName>
</protein>
<keyword id="KW-0002">3D-structure</keyword>
<keyword id="KW-0378">Hydrolase</keyword>
<keyword id="KW-0614">Plasmid</keyword>
<keyword id="KW-0904">Protein phosphatase</keyword>
<keyword id="KW-0964">Secreted</keyword>
<keyword id="KW-0843">Virulence</keyword>
<organism>
    <name type="scientific">Yersinia enterocolitica</name>
    <dbReference type="NCBI Taxonomy" id="630"/>
    <lineage>
        <taxon>Bacteria</taxon>
        <taxon>Pseudomonadati</taxon>
        <taxon>Pseudomonadota</taxon>
        <taxon>Gammaproteobacteria</taxon>
        <taxon>Enterobacterales</taxon>
        <taxon>Yersiniaceae</taxon>
        <taxon>Yersinia</taxon>
    </lineage>
</organism>
<accession>P15273</accession>
<geneLocation type="plasmid">
    <name>pYV</name>
</geneLocation>
<reference key="1">
    <citation type="journal article" date="1988" name="Microb. Pathog.">
        <title>Nucleotide sequence and transcription analysis of yop51 from Yersinia enterocolitica W22703.</title>
        <authorList>
            <person name="Michiels T."/>
            <person name="Cornelis G."/>
        </authorList>
    </citation>
    <scope>NUCLEOTIDE SEQUENCE [GENOMIC DNA]</scope>
    <source>
        <strain>W22703 / Serotype O:9 / Biotype 2</strain>
    </source>
</reference>
<reference key="2">
    <citation type="journal article" date="1990" name="Science">
        <title>Protein tyrosine phosphatase activity of an essential virulence determinant in Yersinia.</title>
        <authorList>
            <person name="Guan K.L."/>
            <person name="Dixon J.E."/>
        </authorList>
    </citation>
    <scope>FUNCTION</scope>
    <scope>CATALYTIC ACTIVITY</scope>
</reference>
<reference key="3">
    <citation type="journal article" date="1992" name="J. Biol. Chem.">
        <title>Expression, purification, and physicochemical characterization of a recombinant Yersinia protein tyrosine phosphatase.</title>
        <authorList>
            <person name="Zhang Z.-Y."/>
            <person name="Clemens J.C."/>
            <person name="Schubert H.L."/>
            <person name="Stuckey J.A."/>
            <person name="Fischer M.W.F."/>
            <person name="Hume D.M."/>
            <person name="Saper M.A."/>
            <person name="Dixon J.E."/>
        </authorList>
    </citation>
    <scope>CHARACTERIZATION</scope>
</reference>
<reference key="4">
    <citation type="journal article" date="1994" name="Nature">
        <title>Crystal structure of Yersinia protein tyrosine phosphatase at 2.5 A and the complex with tungstate.</title>
        <authorList>
            <person name="Stuckey J.A."/>
            <person name="Schubert H.L."/>
            <person name="Fauman E.B."/>
            <person name="Zhang Z.-Y."/>
            <person name="Dixon J.E."/>
            <person name="Saper M.A."/>
        </authorList>
    </citation>
    <scope>X-RAY CRYSTALLOGRAPHY (2.5 ANGSTROMS)</scope>
</reference>
<reference key="5">
    <citation type="journal article" date="1996" name="J. Biol. Chem.">
        <title>The X-ray crystal structures of Yersinia tyrosine phosphatase with bound tungstate and nitrate. Mechanistic implications.</title>
        <authorList>
            <person name="Fauman E.B."/>
            <person name="Yuvaniyama C."/>
            <person name="Schubert H.L."/>
            <person name="Stuckey J.A."/>
            <person name="Saper M.A."/>
        </authorList>
    </citation>
    <scope>X-RAY CRYSTALLOGRAPHY (2.4 ANGSTROMS) OF 186-468</scope>
</reference>
<proteinExistence type="evidence at protein level"/>
<feature type="chain" id="PRO_0000094861" description="Tyrosine-protein phosphatase YopH">
    <location>
        <begin position="1"/>
        <end position="468"/>
    </location>
</feature>
<feature type="domain" description="Tyrosine-protein phosphatase" evidence="1">
    <location>
        <begin position="152"/>
        <end position="461"/>
    </location>
</feature>
<feature type="region of interest" description="Disordered" evidence="3">
    <location>
        <begin position="127"/>
        <end position="194"/>
    </location>
</feature>
<feature type="compositionally biased region" description="Low complexity" evidence="3">
    <location>
        <begin position="130"/>
        <end position="140"/>
    </location>
</feature>
<feature type="active site" description="Phosphocysteine intermediate">
    <location>
        <position position="403"/>
    </location>
</feature>
<feature type="strand" evidence="7">
    <location>
        <begin position="37"/>
        <end position="39"/>
    </location>
</feature>
<feature type="strand" evidence="7">
    <location>
        <begin position="42"/>
        <end position="46"/>
    </location>
</feature>
<feature type="helix" evidence="7">
    <location>
        <begin position="50"/>
        <end position="62"/>
    </location>
</feature>
<feature type="helix" evidence="8">
    <location>
        <begin position="191"/>
        <end position="208"/>
    </location>
</feature>
<feature type="strand" evidence="8">
    <location>
        <begin position="221"/>
        <end position="224"/>
    </location>
</feature>
<feature type="helix" evidence="10">
    <location>
        <begin position="236"/>
        <end position="238"/>
    </location>
</feature>
<feature type="strand" evidence="9">
    <location>
        <begin position="239"/>
        <end position="241"/>
    </location>
</feature>
<feature type="strand" evidence="8">
    <location>
        <begin position="246"/>
        <end position="251"/>
    </location>
</feature>
<feature type="strand" evidence="8">
    <location>
        <begin position="254"/>
        <end position="259"/>
    </location>
</feature>
<feature type="helix" evidence="8">
    <location>
        <begin position="264"/>
        <end position="266"/>
    </location>
</feature>
<feature type="helix" evidence="8">
    <location>
        <begin position="267"/>
        <end position="276"/>
    </location>
</feature>
<feature type="strand" evidence="8">
    <location>
        <begin position="282"/>
        <end position="284"/>
    </location>
</feature>
<feature type="helix" evidence="8">
    <location>
        <begin position="288"/>
        <end position="292"/>
    </location>
</feature>
<feature type="helix" evidence="8">
    <location>
        <begin position="294"/>
        <end position="296"/>
    </location>
</feature>
<feature type="strand" evidence="8">
    <location>
        <begin position="302"/>
        <end position="304"/>
    </location>
</feature>
<feature type="strand" evidence="8">
    <location>
        <begin position="306"/>
        <end position="308"/>
    </location>
</feature>
<feature type="strand" evidence="8">
    <location>
        <begin position="311"/>
        <end position="324"/>
    </location>
</feature>
<feature type="strand" evidence="8">
    <location>
        <begin position="327"/>
        <end position="338"/>
    </location>
</feature>
<feature type="strand" evidence="8">
    <location>
        <begin position="344"/>
        <end position="351"/>
    </location>
</feature>
<feature type="strand" evidence="8">
    <location>
        <begin position="356"/>
        <end position="358"/>
    </location>
</feature>
<feature type="helix" evidence="8">
    <location>
        <begin position="362"/>
        <end position="385"/>
    </location>
</feature>
<feature type="helix" evidence="8">
    <location>
        <begin position="389"/>
        <end position="392"/>
    </location>
</feature>
<feature type="strand" evidence="6">
    <location>
        <begin position="394"/>
        <end position="397"/>
    </location>
</feature>
<feature type="strand" evidence="8">
    <location>
        <begin position="400"/>
        <end position="408"/>
    </location>
</feature>
<feature type="helix" evidence="8">
    <location>
        <begin position="409"/>
        <end position="419"/>
    </location>
</feature>
<feature type="helix" evidence="9">
    <location>
        <begin position="422"/>
        <end position="424"/>
    </location>
</feature>
<feature type="helix" evidence="8">
    <location>
        <begin position="429"/>
        <end position="439"/>
    </location>
</feature>
<feature type="helix" evidence="8">
    <location>
        <begin position="448"/>
        <end position="460"/>
    </location>
</feature>
<comment type="function">
    <text evidence="4">Essential virulence determinant. This protein is a protein tyrosine phosphatase. The essential function of YopH in Yersinia pathogenesis is host-protein dephosphorylation. It contributes to the ability of the bacteria to resist phagocytosis by peritoneal macrophages.</text>
</comment>
<comment type="catalytic activity">
    <reaction evidence="2 4">
        <text>O-phospho-L-tyrosyl-[protein] + H2O = L-tyrosyl-[protein] + phosphate</text>
        <dbReference type="Rhea" id="RHEA:10684"/>
        <dbReference type="Rhea" id="RHEA-COMP:10136"/>
        <dbReference type="Rhea" id="RHEA-COMP:20101"/>
        <dbReference type="ChEBI" id="CHEBI:15377"/>
        <dbReference type="ChEBI" id="CHEBI:43474"/>
        <dbReference type="ChEBI" id="CHEBI:46858"/>
        <dbReference type="ChEBI" id="CHEBI:61978"/>
        <dbReference type="EC" id="3.1.3.48"/>
    </reaction>
</comment>
<comment type="subunit">
    <text>Monomer.</text>
</comment>
<comment type="subcellular location">
    <subcellularLocation>
        <location>Secreted</location>
    </subcellularLocation>
    <text>Secreted via type III secretion system.</text>
</comment>
<comment type="induction">
    <text>At 37 degrees Celsius in the absence of calcium.</text>
</comment>
<comment type="similarity">
    <text evidence="5">Belongs to the protein-tyrosine phosphatase family. Non-receptor class subfamily.</text>
</comment>
<dbReference type="EC" id="3.1.3.48"/>
<dbReference type="EMBL" id="M30457">
    <property type="protein sequence ID" value="AAA19860.1"/>
    <property type="molecule type" value="Unassigned_DNA"/>
</dbReference>
<dbReference type="PIR" id="A53889">
    <property type="entry name" value="A53889"/>
</dbReference>
<dbReference type="RefSeq" id="NP_052424.1">
    <property type="nucleotide sequence ID" value="NC_002120.1"/>
</dbReference>
<dbReference type="RefSeq" id="WP_010891234.1">
    <property type="nucleotide sequence ID" value="NZ_KN150737.1"/>
</dbReference>
<dbReference type="PDB" id="1LYV">
    <property type="method" value="X-ray"/>
    <property type="resolution" value="1.36 A"/>
    <property type="chains" value="A=163-468"/>
</dbReference>
<dbReference type="PDB" id="1PA9">
    <property type="method" value="X-ray"/>
    <property type="resolution" value="2.00 A"/>
    <property type="chains" value="A=185-468"/>
</dbReference>
<dbReference type="PDB" id="1XXP">
    <property type="method" value="X-ray"/>
    <property type="resolution" value="3.00 A"/>
    <property type="chains" value="A/B=163-468"/>
</dbReference>
<dbReference type="PDB" id="1XXV">
    <property type="method" value="X-ray"/>
    <property type="resolution" value="2.50 A"/>
    <property type="chains" value="A/B=163-468"/>
</dbReference>
<dbReference type="PDB" id="1YPT">
    <property type="method" value="X-ray"/>
    <property type="resolution" value="2.50 A"/>
    <property type="chains" value="A/B=164-468"/>
</dbReference>
<dbReference type="PDB" id="1YTN">
    <property type="method" value="X-ray"/>
    <property type="resolution" value="2.40 A"/>
    <property type="chains" value="A=164-468"/>
</dbReference>
<dbReference type="PDB" id="1YTS">
    <property type="method" value="X-ray"/>
    <property type="resolution" value="2.50 A"/>
    <property type="chains" value="A=191-468"/>
</dbReference>
<dbReference type="PDB" id="1YTW">
    <property type="method" value="X-ray"/>
    <property type="resolution" value="2.40 A"/>
    <property type="chains" value="A=164-468"/>
</dbReference>
<dbReference type="PDB" id="2I42">
    <property type="method" value="X-ray"/>
    <property type="resolution" value="2.20 A"/>
    <property type="chains" value="A=164-468"/>
</dbReference>
<dbReference type="PDB" id="3BLT">
    <property type="method" value="X-ray"/>
    <property type="resolution" value="2.20 A"/>
    <property type="chains" value="A=164-468"/>
</dbReference>
<dbReference type="PDB" id="3BLU">
    <property type="method" value="X-ray"/>
    <property type="resolution" value="2.00 A"/>
    <property type="chains" value="A=164-468"/>
</dbReference>
<dbReference type="PDB" id="3BM8">
    <property type="method" value="X-ray"/>
    <property type="resolution" value="2.70 A"/>
    <property type="chains" value="A=164-468"/>
</dbReference>
<dbReference type="PDB" id="3F99">
    <property type="method" value="X-ray"/>
    <property type="resolution" value="1.65 A"/>
    <property type="chains" value="A=164-468"/>
</dbReference>
<dbReference type="PDB" id="3F9A">
    <property type="method" value="X-ray"/>
    <property type="resolution" value="1.69 A"/>
    <property type="chains" value="A=164-468"/>
</dbReference>
<dbReference type="PDB" id="3F9B">
    <property type="method" value="X-ray"/>
    <property type="resolution" value="1.42 A"/>
    <property type="chains" value="A=164-468"/>
</dbReference>
<dbReference type="PDB" id="3U96">
    <property type="method" value="X-ray"/>
    <property type="resolution" value="1.80 A"/>
    <property type="chains" value="A/B=163-468"/>
</dbReference>
<dbReference type="PDB" id="4GF3">
    <property type="method" value="X-ray"/>
    <property type="resolution" value="1.90 A"/>
    <property type="chains" value="B=21-63"/>
</dbReference>
<dbReference type="PDB" id="4YAA">
    <property type="method" value="X-ray"/>
    <property type="resolution" value="1.05 A"/>
    <property type="chains" value="A=164-468"/>
</dbReference>
<dbReference type="PDB" id="4Z6B">
    <property type="method" value="X-ray"/>
    <property type="resolution" value="1.20 A"/>
    <property type="chains" value="A=164-468"/>
</dbReference>
<dbReference type="PDB" id="4ZI4">
    <property type="method" value="X-ray"/>
    <property type="resolution" value="1.12 A"/>
    <property type="chains" value="A=164-468"/>
</dbReference>
<dbReference type="PDB" id="4ZN5">
    <property type="method" value="X-ray"/>
    <property type="resolution" value="1.12 A"/>
    <property type="chains" value="A=164-468"/>
</dbReference>
<dbReference type="PDB" id="6XFT">
    <property type="method" value="X-ray"/>
    <property type="resolution" value="1.78 A"/>
    <property type="chains" value="A=164-468"/>
</dbReference>
<dbReference type="PDBsum" id="1LYV"/>
<dbReference type="PDBsum" id="1PA9"/>
<dbReference type="PDBsum" id="1XXP"/>
<dbReference type="PDBsum" id="1XXV"/>
<dbReference type="PDBsum" id="1YPT"/>
<dbReference type="PDBsum" id="1YTN"/>
<dbReference type="PDBsum" id="1YTS"/>
<dbReference type="PDBsum" id="1YTW"/>
<dbReference type="PDBsum" id="2I42"/>
<dbReference type="PDBsum" id="3BLT"/>
<dbReference type="PDBsum" id="3BLU"/>
<dbReference type="PDBsum" id="3BM8"/>
<dbReference type="PDBsum" id="3F99"/>
<dbReference type="PDBsum" id="3F9A"/>
<dbReference type="PDBsum" id="3F9B"/>
<dbReference type="PDBsum" id="3U96"/>
<dbReference type="PDBsum" id="4GF3"/>
<dbReference type="PDBsum" id="4YAA"/>
<dbReference type="PDBsum" id="4Z6B"/>
<dbReference type="PDBsum" id="4ZI4"/>
<dbReference type="PDBsum" id="4ZN5"/>
<dbReference type="PDBsum" id="6XFT"/>
<dbReference type="BMRB" id="P15273"/>
<dbReference type="SMR" id="P15273"/>
<dbReference type="BindingDB" id="P15273"/>
<dbReference type="ChEMBL" id="CHEMBL4404"/>
<dbReference type="DrugBank" id="DB01800">
    <property type="generic name" value="4-Nitrocatechol sulfate"/>
</dbReference>
<dbReference type="DrugBank" id="DB08433">
    <property type="generic name" value="phenyl ethenesulfonate"/>
</dbReference>
<dbReference type="KEGG" id="yet:CH48_4189"/>
<dbReference type="BRENDA" id="3.1.3.48">
    <property type="organism ID" value="6741"/>
</dbReference>
<dbReference type="SABIO-RK" id="P15273"/>
<dbReference type="EvolutionaryTrace" id="P15273"/>
<dbReference type="PRO" id="PR:P15273"/>
<dbReference type="GO" id="GO:0005576">
    <property type="term" value="C:extracellular region"/>
    <property type="evidence" value="ECO:0007669"/>
    <property type="project" value="UniProtKB-SubCell"/>
</dbReference>
<dbReference type="GO" id="GO:0004725">
    <property type="term" value="F:protein tyrosine phosphatase activity"/>
    <property type="evidence" value="ECO:0007669"/>
    <property type="project" value="UniProtKB-EC"/>
</dbReference>
<dbReference type="CDD" id="cd14559">
    <property type="entry name" value="PTP_YopH-like"/>
    <property type="match status" value="1"/>
</dbReference>
<dbReference type="DisProt" id="DP01528"/>
<dbReference type="Gene3D" id="3.90.190.10">
    <property type="entry name" value="Protein tyrosine phosphatase superfamily"/>
    <property type="match status" value="1"/>
</dbReference>
<dbReference type="Gene3D" id="3.30.1570.10">
    <property type="entry name" value="Protein-tyrosine phosphatase, YopH, N-terminal domain"/>
    <property type="match status" value="1"/>
</dbReference>
<dbReference type="InterPro" id="IPR029021">
    <property type="entry name" value="Prot-tyrosine_phosphatase-like"/>
</dbReference>
<dbReference type="InterPro" id="IPR050348">
    <property type="entry name" value="Protein-Tyr_Phosphatase"/>
</dbReference>
<dbReference type="InterPro" id="IPR015103">
    <property type="entry name" value="ProtTyrPase_YopH_N"/>
</dbReference>
<dbReference type="InterPro" id="IPR036484">
    <property type="entry name" value="ProtTyrPase_YopH_N_sf"/>
</dbReference>
<dbReference type="InterPro" id="IPR000242">
    <property type="entry name" value="PTP_cat"/>
</dbReference>
<dbReference type="InterPro" id="IPR016130">
    <property type="entry name" value="Tyr_Pase_AS"/>
</dbReference>
<dbReference type="InterPro" id="IPR003595">
    <property type="entry name" value="Tyr_Pase_cat"/>
</dbReference>
<dbReference type="InterPro" id="IPR000387">
    <property type="entry name" value="Tyr_Pase_dom"/>
</dbReference>
<dbReference type="InterPro" id="IPR003546">
    <property type="entry name" value="Tyr_Pase_SptP/YopH"/>
</dbReference>
<dbReference type="PANTHER" id="PTHR19134">
    <property type="entry name" value="RECEPTOR-TYPE TYROSINE-PROTEIN PHOSPHATASE"/>
    <property type="match status" value="1"/>
</dbReference>
<dbReference type="PANTHER" id="PTHR19134:SF449">
    <property type="entry name" value="TYROSINE-PROTEIN PHOSPHATASE 1"/>
    <property type="match status" value="1"/>
</dbReference>
<dbReference type="Pfam" id="PF00102">
    <property type="entry name" value="Y_phosphatase"/>
    <property type="match status" value="1"/>
</dbReference>
<dbReference type="Pfam" id="PF09013">
    <property type="entry name" value="YopH_N"/>
    <property type="match status" value="1"/>
</dbReference>
<dbReference type="PRINTS" id="PR01371">
    <property type="entry name" value="BACYPHPHTASE"/>
</dbReference>
<dbReference type="PRINTS" id="PR00700">
    <property type="entry name" value="PRTYPHPHTASE"/>
</dbReference>
<dbReference type="SMART" id="SM00194">
    <property type="entry name" value="PTPc"/>
    <property type="match status" value="1"/>
</dbReference>
<dbReference type="SMART" id="SM00404">
    <property type="entry name" value="PTPc_motif"/>
    <property type="match status" value="1"/>
</dbReference>
<dbReference type="SUPFAM" id="SSF52799">
    <property type="entry name" value="(Phosphotyrosine protein) phosphatases II"/>
    <property type="match status" value="1"/>
</dbReference>
<dbReference type="SUPFAM" id="SSF64449">
    <property type="entry name" value="YopH tyrosine phosphatase N-terminal domain"/>
    <property type="match status" value="1"/>
</dbReference>
<dbReference type="PROSITE" id="PS00383">
    <property type="entry name" value="TYR_PHOSPHATASE_1"/>
    <property type="match status" value="1"/>
</dbReference>
<dbReference type="PROSITE" id="PS50056">
    <property type="entry name" value="TYR_PHOSPHATASE_2"/>
    <property type="match status" value="1"/>
</dbReference>
<dbReference type="PROSITE" id="PS50055">
    <property type="entry name" value="TYR_PHOSPHATASE_PTP"/>
    <property type="match status" value="1"/>
</dbReference>
<gene>
    <name type="primary">yopH</name>
    <name type="synonym">yop51</name>
</gene>
<sequence length="468" mass="50939">MNLSLSDLHRQVSRLVQQESGDCTGKLRGNVAANKETTFQGLTIASGARESEKVFAQTVLSHVANIVLTQEDTAKLLQSTVKHNLNNYELRSVGNGNSVLVSLRSDQMTLQDAKVLLEAALRQESGARGHVSSHSHSVLHAPGTPVREGLRSHLDPRTPPLPPRERPHTSGHHGAGEARATAPSTVSPYGPEARAELSSRLTTLRNTLAPATNDPRYLQACGGEKLNRFRDIQCCRQTAVRADLNANYIQVGNTRTIACQYPLQSQLESHFRMLAENRTPVLAVLASSSEIANQRFGMPDYFRQSGTYGSITVESKMTQQVGLGDGIMADMYTLTIREAGQKTISVPVVHVGNWPDQTAVSSEVTKALASLVDQTAETKRNMYESKGSSAVADDSKLRPVIHCRAGVGRTAQLIGAMCMNDSRNSQLSVEDMVSQMRVQRNGIMVQKDEQLDVLIKLAEGQGRPLLNS</sequence>
<evidence type="ECO:0000255" key="1">
    <source>
        <dbReference type="PROSITE-ProRule" id="PRU00160"/>
    </source>
</evidence>
<evidence type="ECO:0000255" key="2">
    <source>
        <dbReference type="PROSITE-ProRule" id="PRU10044"/>
    </source>
</evidence>
<evidence type="ECO:0000256" key="3">
    <source>
        <dbReference type="SAM" id="MobiDB-lite"/>
    </source>
</evidence>
<evidence type="ECO:0000269" key="4">
    <source>
    </source>
</evidence>
<evidence type="ECO:0000305" key="5"/>
<evidence type="ECO:0007829" key="6">
    <source>
        <dbReference type="PDB" id="1YTN"/>
    </source>
</evidence>
<evidence type="ECO:0007829" key="7">
    <source>
        <dbReference type="PDB" id="4GF3"/>
    </source>
</evidence>
<evidence type="ECO:0007829" key="8">
    <source>
        <dbReference type="PDB" id="4YAA"/>
    </source>
</evidence>
<evidence type="ECO:0007829" key="9">
    <source>
        <dbReference type="PDB" id="4ZI4"/>
    </source>
</evidence>
<evidence type="ECO:0007829" key="10">
    <source>
        <dbReference type="PDB" id="4ZN5"/>
    </source>
</evidence>